<feature type="chain" id="PRO_0000052250" description="Trans-cinnamate 4-monooxygenase">
    <location>
        <begin position="1"/>
        <end position="505"/>
    </location>
</feature>
<feature type="transmembrane region" description="Helical" evidence="3">
    <location>
        <begin position="3"/>
        <end position="23"/>
    </location>
</feature>
<feature type="binding site" evidence="2">
    <location>
        <begin position="213"/>
        <end position="218"/>
    </location>
    <ligand>
        <name>(E)-cinnamate</name>
        <dbReference type="ChEBI" id="CHEBI:15669"/>
    </ligand>
</feature>
<feature type="binding site" evidence="2">
    <location>
        <position position="306"/>
    </location>
    <ligand>
        <name>(E)-cinnamate</name>
        <dbReference type="ChEBI" id="CHEBI:15669"/>
    </ligand>
</feature>
<feature type="binding site" description="axial binding residue" evidence="2">
    <location>
        <position position="447"/>
    </location>
    <ligand>
        <name>heme</name>
        <dbReference type="ChEBI" id="CHEBI:30413"/>
    </ligand>
    <ligandPart>
        <name>Fe</name>
        <dbReference type="ChEBI" id="CHEBI:18248"/>
    </ligandPart>
</feature>
<feature type="sequence variant" description="In clone PC4H-II.">
    <original>V</original>
    <variation>I</variation>
    <location>
        <position position="40"/>
    </location>
</feature>
<feature type="sequence conflict" description="In Ref. 1; AA sequence." evidence="4" ref="1">
    <original>L</original>
    <variation>V</variation>
    <location>
        <position position="38"/>
    </location>
</feature>
<feature type="sequence conflict" description="In Ref. 1; AA sequence." evidence="4" ref="1">
    <original>V</original>
    <variation>I</variation>
    <location>
        <position position="498"/>
    </location>
</feature>
<sequence length="505" mass="57888">MDLLLLEKTLLGLFLAAVVAIVVSKLRGKRFKLPPGPLPVPIFGNWLQVGDDLNHRNLTQLAKRFGDIFLLRMGQRNLVVVSSPDLAKEVLHTQGVEFGSRTRNVVFDIFTGEGQDMVFTVYGEHWRKMRRIMTVPFFTNKVVQQYRHGWEAEAAAVVDDVRKNPDAAVSGLVIRRRLQLMMYNNMYRIMFDRRFESEEDPLFQRLKALNGERSRLAQSFEYNYGDFIPILRPFLKGYLKICKEVKETRLKLFKDYFVDERKNIGSTKSTNNEGLKCAIDHILDAEKKGEINEDNVLYIVENINVAAIETTLWSIEWGIAELVNHPEIQQKVRDEIDRVLGVGHQVTEPDIQKLPYLQAVVKETLRLRMAIPLLVPHMNLHDAKLGGYDIPAESKILVNAWWLANNPAHWKKPEEFRPERFFEEESHVEANGNDFRYLPFGVGRRSCPGIILALPILGITLGRLVQNFELLPPPGQSQIDTSEKGGQFSLHILKHSTVVAKPRSF</sequence>
<protein>
    <recommendedName>
        <fullName>Trans-cinnamate 4-monooxygenase</fullName>
        <ecNumber evidence="1">1.14.14.91</ecNumber>
    </recommendedName>
    <alternativeName>
        <fullName>Cinnamic acid 4-hydroxylase</fullName>
        <shortName>C4H</shortName>
        <shortName>CA4H</shortName>
    </alternativeName>
    <alternativeName>
        <fullName>Cytochrome P450 73</fullName>
    </alternativeName>
    <alternativeName>
        <fullName>Cytochrome P450C4H</fullName>
    </alternativeName>
</protein>
<gene>
    <name type="primary">CYP73A2</name>
</gene>
<reference key="1">
    <citation type="journal article" date="1993" name="Biochem. Biophys. Res. Commun.">
        <title>Molecular cloning and sequencing of a cDNA encoding mung bean cytochrome P450 (P450C4H) possessing cinnamate 4-hydroxylase activity.</title>
        <authorList>
            <person name="Mizutani M."/>
            <person name="Ward E."/>
            <person name="Dimaio J."/>
            <person name="Ohta D."/>
            <person name="Ryals J."/>
            <person name="Sato R."/>
        </authorList>
    </citation>
    <scope>NUCLEOTIDE SEQUENCE [MRNA]</scope>
    <scope>PROTEIN SEQUENCE OF 1-49; 255-262 AND 485-501</scope>
    <source>
        <tissue>Hypocotyl</tissue>
    </source>
</reference>
<comment type="function">
    <text evidence="1">Catalyzes the first oxidative step of the phenylpropanoid pathway in higher plants by transforming trans-cinnamate into p-coumarate (By similarity). The compounds formed by this pathway are essential components for lignification, pollination, and defense against ultraviolet light, predators and pathogens (By similarity).</text>
</comment>
<comment type="catalytic activity">
    <reaction evidence="1">
        <text>(E)-cinnamate + reduced [NADPH--hemoprotein reductase] + O2 = (E)-4-coumarate + oxidized [NADPH--hemoprotein reductase] + H2O + H(+)</text>
        <dbReference type="Rhea" id="RHEA:10608"/>
        <dbReference type="Rhea" id="RHEA-COMP:11964"/>
        <dbReference type="Rhea" id="RHEA-COMP:11965"/>
        <dbReference type="ChEBI" id="CHEBI:12876"/>
        <dbReference type="ChEBI" id="CHEBI:15377"/>
        <dbReference type="ChEBI" id="CHEBI:15378"/>
        <dbReference type="ChEBI" id="CHEBI:15379"/>
        <dbReference type="ChEBI" id="CHEBI:15669"/>
        <dbReference type="ChEBI" id="CHEBI:57618"/>
        <dbReference type="ChEBI" id="CHEBI:58210"/>
        <dbReference type="EC" id="1.14.14.91"/>
    </reaction>
</comment>
<comment type="cofactor">
    <cofactor evidence="2">
        <name>heme</name>
        <dbReference type="ChEBI" id="CHEBI:30413"/>
    </cofactor>
</comment>
<comment type="pathway">
    <text evidence="4">Phenylpropanoid metabolism; trans-4-coumarate biosynthesis; trans-4-coumarate from trans-cinnamate: step 1/1.</text>
</comment>
<comment type="subcellular location">
    <subcellularLocation>
        <location evidence="3">Membrane</location>
        <topology evidence="3">Single-pass membrane protein</topology>
    </subcellularLocation>
</comment>
<comment type="similarity">
    <text evidence="4">Belongs to the cytochrome P450 family.</text>
</comment>
<dbReference type="EC" id="1.14.14.91" evidence="1"/>
<dbReference type="EMBL" id="L07634">
    <property type="protein sequence ID" value="AAA33755.1"/>
    <property type="molecule type" value="mRNA"/>
</dbReference>
<dbReference type="PIR" id="JC1458">
    <property type="entry name" value="JC1458"/>
</dbReference>
<dbReference type="RefSeq" id="NP_001304077.1">
    <property type="nucleotide sequence ID" value="NM_001317148.1"/>
</dbReference>
<dbReference type="SMR" id="P37115"/>
<dbReference type="STRING" id="3916.P37115"/>
<dbReference type="GeneID" id="106764845"/>
<dbReference type="KEGG" id="vra:106764845"/>
<dbReference type="OrthoDB" id="1470350at2759"/>
<dbReference type="UniPathway" id="UPA00825">
    <property type="reaction ID" value="UER00789"/>
</dbReference>
<dbReference type="Proteomes" id="UP000087766">
    <property type="component" value="Chromosome 6"/>
</dbReference>
<dbReference type="GO" id="GO:0016020">
    <property type="term" value="C:membrane"/>
    <property type="evidence" value="ECO:0007669"/>
    <property type="project" value="UniProtKB-SubCell"/>
</dbReference>
<dbReference type="GO" id="GO:0020037">
    <property type="term" value="F:heme binding"/>
    <property type="evidence" value="ECO:0007669"/>
    <property type="project" value="InterPro"/>
</dbReference>
<dbReference type="GO" id="GO:0005506">
    <property type="term" value="F:iron ion binding"/>
    <property type="evidence" value="ECO:0007669"/>
    <property type="project" value="InterPro"/>
</dbReference>
<dbReference type="GO" id="GO:0016710">
    <property type="term" value="F:trans-cinnamate 4-monooxygenase activity"/>
    <property type="evidence" value="ECO:0007669"/>
    <property type="project" value="UniProtKB-EC"/>
</dbReference>
<dbReference type="GO" id="GO:0009808">
    <property type="term" value="P:lignin metabolic process"/>
    <property type="evidence" value="ECO:0007669"/>
    <property type="project" value="TreeGrafter"/>
</dbReference>
<dbReference type="CDD" id="cd11074">
    <property type="entry name" value="CYP73"/>
    <property type="match status" value="1"/>
</dbReference>
<dbReference type="FunFam" id="1.10.630.10:FF:000013">
    <property type="entry name" value="Trans-cinnamate 4-monooxygenase"/>
    <property type="match status" value="1"/>
</dbReference>
<dbReference type="Gene3D" id="1.10.630.10">
    <property type="entry name" value="Cytochrome P450"/>
    <property type="match status" value="1"/>
</dbReference>
<dbReference type="InterPro" id="IPR001128">
    <property type="entry name" value="Cyt_P450"/>
</dbReference>
<dbReference type="InterPro" id="IPR017972">
    <property type="entry name" value="Cyt_P450_CS"/>
</dbReference>
<dbReference type="InterPro" id="IPR002401">
    <property type="entry name" value="Cyt_P450_E_grp-I"/>
</dbReference>
<dbReference type="InterPro" id="IPR036396">
    <property type="entry name" value="Cyt_P450_sf"/>
</dbReference>
<dbReference type="PANTHER" id="PTHR47948">
    <property type="entry name" value="TRANS-CINNAMATE 4-MONOOXYGENASE"/>
    <property type="match status" value="1"/>
</dbReference>
<dbReference type="PANTHER" id="PTHR47948:SF11">
    <property type="entry name" value="TRANS-CINNAMATE 4-MONOOXYGENASE"/>
    <property type="match status" value="1"/>
</dbReference>
<dbReference type="Pfam" id="PF00067">
    <property type="entry name" value="p450"/>
    <property type="match status" value="1"/>
</dbReference>
<dbReference type="PRINTS" id="PR00463">
    <property type="entry name" value="EP450I"/>
</dbReference>
<dbReference type="PRINTS" id="PR00385">
    <property type="entry name" value="P450"/>
</dbReference>
<dbReference type="SUPFAM" id="SSF48264">
    <property type="entry name" value="Cytochrome P450"/>
    <property type="match status" value="1"/>
</dbReference>
<dbReference type="PROSITE" id="PS00086">
    <property type="entry name" value="CYTOCHROME_P450"/>
    <property type="match status" value="1"/>
</dbReference>
<name>TCMO_VIGRR</name>
<organism>
    <name type="scientific">Vigna radiata var. radiata</name>
    <name type="common">Mung bean</name>
    <name type="synonym">Phaseolus aureus</name>
    <dbReference type="NCBI Taxonomy" id="3916"/>
    <lineage>
        <taxon>Eukaryota</taxon>
        <taxon>Viridiplantae</taxon>
        <taxon>Streptophyta</taxon>
        <taxon>Embryophyta</taxon>
        <taxon>Tracheophyta</taxon>
        <taxon>Spermatophyta</taxon>
        <taxon>Magnoliopsida</taxon>
        <taxon>eudicotyledons</taxon>
        <taxon>Gunneridae</taxon>
        <taxon>Pentapetalae</taxon>
        <taxon>rosids</taxon>
        <taxon>fabids</taxon>
        <taxon>Fabales</taxon>
        <taxon>Fabaceae</taxon>
        <taxon>Papilionoideae</taxon>
        <taxon>50 kb inversion clade</taxon>
        <taxon>NPAAA clade</taxon>
        <taxon>indigoferoid/millettioid clade</taxon>
        <taxon>Phaseoleae</taxon>
        <taxon>Vigna</taxon>
    </lineage>
</organism>
<evidence type="ECO:0000250" key="1">
    <source>
        <dbReference type="UniProtKB" id="Q04468"/>
    </source>
</evidence>
<evidence type="ECO:0000250" key="2">
    <source>
        <dbReference type="UniProtKB" id="Q94IP1"/>
    </source>
</evidence>
<evidence type="ECO:0000255" key="3"/>
<evidence type="ECO:0000305" key="4"/>
<accession>P37115</accession>
<proteinExistence type="evidence at protein level"/>
<keyword id="KW-0903">Direct protein sequencing</keyword>
<keyword id="KW-0349">Heme</keyword>
<keyword id="KW-0408">Iron</keyword>
<keyword id="KW-0472">Membrane</keyword>
<keyword id="KW-0479">Metal-binding</keyword>
<keyword id="KW-0503">Monooxygenase</keyword>
<keyword id="KW-0560">Oxidoreductase</keyword>
<keyword id="KW-1185">Reference proteome</keyword>
<keyword id="KW-0812">Transmembrane</keyword>
<keyword id="KW-1133">Transmembrane helix</keyword>